<feature type="chain" id="PRO_0000256964" description="Chaperonin GroEL 1">
    <location>
        <begin position="1"/>
        <end position="547"/>
    </location>
</feature>
<feature type="region of interest" description="Disordered" evidence="2">
    <location>
        <begin position="525"/>
        <end position="547"/>
    </location>
</feature>
<feature type="compositionally biased region" description="Gly residues" evidence="2">
    <location>
        <begin position="533"/>
        <end position="547"/>
    </location>
</feature>
<feature type="binding site" evidence="1">
    <location>
        <begin position="30"/>
        <end position="33"/>
    </location>
    <ligand>
        <name>ATP</name>
        <dbReference type="ChEBI" id="CHEBI:30616"/>
    </ligand>
</feature>
<feature type="binding site" evidence="1">
    <location>
        <position position="51"/>
    </location>
    <ligand>
        <name>ATP</name>
        <dbReference type="ChEBI" id="CHEBI:30616"/>
    </ligand>
</feature>
<feature type="binding site" evidence="1">
    <location>
        <begin position="87"/>
        <end position="91"/>
    </location>
    <ligand>
        <name>ATP</name>
        <dbReference type="ChEBI" id="CHEBI:30616"/>
    </ligand>
</feature>
<feature type="binding site" evidence="1">
    <location>
        <position position="415"/>
    </location>
    <ligand>
        <name>ATP</name>
        <dbReference type="ChEBI" id="CHEBI:30616"/>
    </ligand>
</feature>
<feature type="binding site" evidence="1">
    <location>
        <position position="496"/>
    </location>
    <ligand>
        <name>ATP</name>
        <dbReference type="ChEBI" id="CHEBI:30616"/>
    </ligand>
</feature>
<sequence length="547" mass="57950">MAAKDVKFDTDARDRMLRGVNILADAVKVTLGPKGRNVVIDKSFGAPRITKDGVSVAKEIELSDKFENMGAQMVKEVASRTNDEAGDGTTTATVLAQAIIKEGLKAVAAGMNPMDLKRGIDLATSKVVEAIKAAARPVNDSHEVAQVGTISANGEAQIGRFIADAMQKVGNEGVITVEENKGLETEVEVVEGMQFDRGYLSPYFVTNADKMTAELDDVYILLHEKKLSSLQPMVPLLEAVIQSQKPLLIIAEDVEGEALATLVVNKLRGGLKIAAVKAPGFGDRRKAMLQDIAILTGGQVISEDLGMKLENVTIDMLGRAKKISINKDNTTIVDGNGDKAEIDARVAQIRNQIEETSSDYDREKLQERVAKLAGGVAVIRVGGMTEVEVKERKDRVDDALNATRAAVQEGIVVGGGVALIQGGKALDGLTGENPDQNAGITIVRRALEAPLRQIAQNAGVDGSVVAGKVRESNEKSFGFNAQTEEYGDMFKFGVIDPAKVVRTALEDAASVASLLITTEAMIADKPEPKSPAGGPGMGGMGGMDGMM</sequence>
<protein>
    <recommendedName>
        <fullName evidence="1">Chaperonin GroEL 1</fullName>
        <ecNumber evidence="1">5.6.1.7</ecNumber>
    </recommendedName>
    <alternativeName>
        <fullName evidence="1">60 kDa chaperonin 1</fullName>
    </alternativeName>
    <alternativeName>
        <fullName evidence="1">Chaperonin-60 1</fullName>
        <shortName evidence="1">Cpn60 1</shortName>
    </alternativeName>
</protein>
<dbReference type="EC" id="5.6.1.7" evidence="1"/>
<dbReference type="EMBL" id="CP000143">
    <property type="protein sequence ID" value="ABA78465.1"/>
    <property type="molecule type" value="Genomic_DNA"/>
</dbReference>
<dbReference type="RefSeq" id="YP_352366.1">
    <property type="nucleotide sequence ID" value="NC_007493.2"/>
</dbReference>
<dbReference type="SMR" id="Q3J419"/>
<dbReference type="STRING" id="272943.RSP_2311"/>
<dbReference type="MetOSite" id="Q3J419"/>
<dbReference type="EnsemblBacteria" id="ABA78465">
    <property type="protein sequence ID" value="ABA78465"/>
    <property type="gene ID" value="RSP_2311"/>
</dbReference>
<dbReference type="KEGG" id="rsp:RSP_2311"/>
<dbReference type="PATRIC" id="fig|272943.9.peg.1222"/>
<dbReference type="eggNOG" id="COG0459">
    <property type="taxonomic scope" value="Bacteria"/>
</dbReference>
<dbReference type="OrthoDB" id="9766614at2"/>
<dbReference type="PhylomeDB" id="Q3J419"/>
<dbReference type="Proteomes" id="UP000002703">
    <property type="component" value="Chromosome 1"/>
</dbReference>
<dbReference type="GO" id="GO:0005737">
    <property type="term" value="C:cytoplasm"/>
    <property type="evidence" value="ECO:0007669"/>
    <property type="project" value="UniProtKB-SubCell"/>
</dbReference>
<dbReference type="GO" id="GO:0005524">
    <property type="term" value="F:ATP binding"/>
    <property type="evidence" value="ECO:0007669"/>
    <property type="project" value="UniProtKB-UniRule"/>
</dbReference>
<dbReference type="GO" id="GO:0140662">
    <property type="term" value="F:ATP-dependent protein folding chaperone"/>
    <property type="evidence" value="ECO:0007669"/>
    <property type="project" value="InterPro"/>
</dbReference>
<dbReference type="GO" id="GO:0016853">
    <property type="term" value="F:isomerase activity"/>
    <property type="evidence" value="ECO:0007669"/>
    <property type="project" value="UniProtKB-KW"/>
</dbReference>
<dbReference type="GO" id="GO:0051082">
    <property type="term" value="F:unfolded protein binding"/>
    <property type="evidence" value="ECO:0007669"/>
    <property type="project" value="UniProtKB-UniRule"/>
</dbReference>
<dbReference type="GO" id="GO:0042026">
    <property type="term" value="P:protein refolding"/>
    <property type="evidence" value="ECO:0007669"/>
    <property type="project" value="UniProtKB-UniRule"/>
</dbReference>
<dbReference type="CDD" id="cd03344">
    <property type="entry name" value="GroEL"/>
    <property type="match status" value="1"/>
</dbReference>
<dbReference type="FunFam" id="1.10.560.10:FF:000001">
    <property type="entry name" value="60 kDa chaperonin"/>
    <property type="match status" value="1"/>
</dbReference>
<dbReference type="FunFam" id="3.50.7.10:FF:000001">
    <property type="entry name" value="60 kDa chaperonin"/>
    <property type="match status" value="1"/>
</dbReference>
<dbReference type="Gene3D" id="3.50.7.10">
    <property type="entry name" value="GroEL"/>
    <property type="match status" value="1"/>
</dbReference>
<dbReference type="Gene3D" id="1.10.560.10">
    <property type="entry name" value="GroEL-like equatorial domain"/>
    <property type="match status" value="1"/>
</dbReference>
<dbReference type="Gene3D" id="3.30.260.10">
    <property type="entry name" value="TCP-1-like chaperonin intermediate domain"/>
    <property type="match status" value="1"/>
</dbReference>
<dbReference type="HAMAP" id="MF_00600">
    <property type="entry name" value="CH60"/>
    <property type="match status" value="1"/>
</dbReference>
<dbReference type="InterPro" id="IPR018370">
    <property type="entry name" value="Chaperonin_Cpn60_CS"/>
</dbReference>
<dbReference type="InterPro" id="IPR001844">
    <property type="entry name" value="Cpn60/GroEL"/>
</dbReference>
<dbReference type="InterPro" id="IPR002423">
    <property type="entry name" value="Cpn60/GroEL/TCP-1"/>
</dbReference>
<dbReference type="InterPro" id="IPR027409">
    <property type="entry name" value="GroEL-like_apical_dom_sf"/>
</dbReference>
<dbReference type="InterPro" id="IPR027413">
    <property type="entry name" value="GROEL-like_equatorial_sf"/>
</dbReference>
<dbReference type="InterPro" id="IPR027410">
    <property type="entry name" value="TCP-1-like_intermed_sf"/>
</dbReference>
<dbReference type="NCBIfam" id="TIGR02348">
    <property type="entry name" value="GroEL"/>
    <property type="match status" value="1"/>
</dbReference>
<dbReference type="NCBIfam" id="NF000592">
    <property type="entry name" value="PRK00013.1"/>
    <property type="match status" value="1"/>
</dbReference>
<dbReference type="NCBIfam" id="NF009487">
    <property type="entry name" value="PRK12849.1"/>
    <property type="match status" value="1"/>
</dbReference>
<dbReference type="NCBIfam" id="NF009488">
    <property type="entry name" value="PRK12850.1"/>
    <property type="match status" value="1"/>
</dbReference>
<dbReference type="NCBIfam" id="NF009489">
    <property type="entry name" value="PRK12851.1"/>
    <property type="match status" value="1"/>
</dbReference>
<dbReference type="PANTHER" id="PTHR45633">
    <property type="entry name" value="60 KDA HEAT SHOCK PROTEIN, MITOCHONDRIAL"/>
    <property type="match status" value="1"/>
</dbReference>
<dbReference type="Pfam" id="PF00118">
    <property type="entry name" value="Cpn60_TCP1"/>
    <property type="match status" value="1"/>
</dbReference>
<dbReference type="PRINTS" id="PR00298">
    <property type="entry name" value="CHAPERONIN60"/>
</dbReference>
<dbReference type="SUPFAM" id="SSF52029">
    <property type="entry name" value="GroEL apical domain-like"/>
    <property type="match status" value="1"/>
</dbReference>
<dbReference type="SUPFAM" id="SSF48592">
    <property type="entry name" value="GroEL equatorial domain-like"/>
    <property type="match status" value="1"/>
</dbReference>
<dbReference type="SUPFAM" id="SSF54849">
    <property type="entry name" value="GroEL-intermediate domain like"/>
    <property type="match status" value="1"/>
</dbReference>
<dbReference type="PROSITE" id="PS00296">
    <property type="entry name" value="CHAPERONINS_CPN60"/>
    <property type="match status" value="1"/>
</dbReference>
<organism>
    <name type="scientific">Cereibacter sphaeroides (strain ATCC 17023 / DSM 158 / JCM 6121 / CCUG 31486 / LMG 2827 / NBRC 12203 / NCIMB 8253 / ATH 2.4.1.)</name>
    <name type="common">Rhodobacter sphaeroides</name>
    <dbReference type="NCBI Taxonomy" id="272943"/>
    <lineage>
        <taxon>Bacteria</taxon>
        <taxon>Pseudomonadati</taxon>
        <taxon>Pseudomonadota</taxon>
        <taxon>Alphaproteobacteria</taxon>
        <taxon>Rhodobacterales</taxon>
        <taxon>Paracoccaceae</taxon>
        <taxon>Cereibacter</taxon>
    </lineage>
</organism>
<gene>
    <name evidence="1" type="primary">groEL1</name>
    <name evidence="1" type="synonym">groL1</name>
    <name type="ordered locus">RHOS4_08970</name>
    <name type="ORF">RSP_2311</name>
</gene>
<proteinExistence type="inferred from homology"/>
<comment type="function">
    <text evidence="1">Together with its co-chaperonin GroES, plays an essential role in assisting protein folding. The GroEL-GroES system forms a nano-cage that allows encapsulation of the non-native substrate proteins and provides a physical environment optimized to promote and accelerate protein folding.</text>
</comment>
<comment type="catalytic activity">
    <reaction evidence="1">
        <text>ATP + H2O + a folded polypeptide = ADP + phosphate + an unfolded polypeptide.</text>
        <dbReference type="EC" id="5.6.1.7"/>
    </reaction>
</comment>
<comment type="subunit">
    <text evidence="1">Forms a cylinder of 14 subunits composed of two heptameric rings stacked back-to-back. Interacts with the co-chaperonin GroES.</text>
</comment>
<comment type="subcellular location">
    <subcellularLocation>
        <location evidence="1">Cytoplasm</location>
    </subcellularLocation>
</comment>
<comment type="similarity">
    <text evidence="1">Belongs to the chaperonin (HSP60) family.</text>
</comment>
<accession>Q3J419</accession>
<evidence type="ECO:0000255" key="1">
    <source>
        <dbReference type="HAMAP-Rule" id="MF_00600"/>
    </source>
</evidence>
<evidence type="ECO:0000256" key="2">
    <source>
        <dbReference type="SAM" id="MobiDB-lite"/>
    </source>
</evidence>
<reference key="1">
    <citation type="submission" date="2005-09" db="EMBL/GenBank/DDBJ databases">
        <title>Complete sequence of chromosome 1 of Rhodobacter sphaeroides 2.4.1.</title>
        <authorList>
            <person name="Copeland A."/>
            <person name="Lucas S."/>
            <person name="Lapidus A."/>
            <person name="Barry K."/>
            <person name="Detter J.C."/>
            <person name="Glavina T."/>
            <person name="Hammon N."/>
            <person name="Israni S."/>
            <person name="Pitluck S."/>
            <person name="Richardson P."/>
            <person name="Mackenzie C."/>
            <person name="Choudhary M."/>
            <person name="Larimer F."/>
            <person name="Hauser L.J."/>
            <person name="Land M."/>
            <person name="Donohue T.J."/>
            <person name="Kaplan S."/>
        </authorList>
    </citation>
    <scope>NUCLEOTIDE SEQUENCE [LARGE SCALE GENOMIC DNA]</scope>
    <source>
        <strain>ATCC 17023 / DSM 158 / JCM 6121 / CCUG 31486 / LMG 2827 / NBRC 12203 / NCIMB 8253 / ATH 2.4.1.</strain>
    </source>
</reference>
<name>CH601_CERS4</name>
<keyword id="KW-0067">ATP-binding</keyword>
<keyword id="KW-0143">Chaperone</keyword>
<keyword id="KW-0963">Cytoplasm</keyword>
<keyword id="KW-0413">Isomerase</keyword>
<keyword id="KW-0547">Nucleotide-binding</keyword>
<keyword id="KW-1185">Reference proteome</keyword>